<evidence type="ECO:0000250" key="1"/>
<evidence type="ECO:0000250" key="2">
    <source>
        <dbReference type="UniProtKB" id="Q04771"/>
    </source>
</evidence>
<evidence type="ECO:0000255" key="3"/>
<evidence type="ECO:0000255" key="4">
    <source>
        <dbReference type="PROSITE-ProRule" id="PRU00159"/>
    </source>
</evidence>
<evidence type="ECO:0000255" key="5">
    <source>
        <dbReference type="PROSITE-ProRule" id="PRU00585"/>
    </source>
</evidence>
<evidence type="ECO:0000255" key="6">
    <source>
        <dbReference type="PROSITE-ProRule" id="PRU10027"/>
    </source>
</evidence>
<evidence type="ECO:0000269" key="7">
    <source>
    </source>
</evidence>
<evidence type="ECO:0000269" key="8">
    <source>
    </source>
</evidence>
<evidence type="ECO:0000269" key="9">
    <source>
    </source>
</evidence>
<evidence type="ECO:0000269" key="10">
    <source>
    </source>
</evidence>
<evidence type="ECO:0000269" key="11">
    <source>
    </source>
</evidence>
<evidence type="ECO:0000305" key="12"/>
<gene>
    <name type="primary">Acvr1</name>
    <name type="synonym">Acvrlk2</name>
    <name type="synonym">Tgfb1</name>
</gene>
<organism>
    <name type="scientific">Mus musculus</name>
    <name type="common">Mouse</name>
    <dbReference type="NCBI Taxonomy" id="10090"/>
    <lineage>
        <taxon>Eukaryota</taxon>
        <taxon>Metazoa</taxon>
        <taxon>Chordata</taxon>
        <taxon>Craniata</taxon>
        <taxon>Vertebrata</taxon>
        <taxon>Euteleostomi</taxon>
        <taxon>Mammalia</taxon>
        <taxon>Eutheria</taxon>
        <taxon>Euarchontoglires</taxon>
        <taxon>Glires</taxon>
        <taxon>Rodentia</taxon>
        <taxon>Myomorpha</taxon>
        <taxon>Muroidea</taxon>
        <taxon>Muridae</taxon>
        <taxon>Murinae</taxon>
        <taxon>Mus</taxon>
        <taxon>Mus</taxon>
    </lineage>
</organism>
<keyword id="KW-0067">ATP-binding</keyword>
<keyword id="KW-0325">Glycoprotein</keyword>
<keyword id="KW-0418">Kinase</keyword>
<keyword id="KW-0460">Magnesium</keyword>
<keyword id="KW-0464">Manganese</keyword>
<keyword id="KW-0472">Membrane</keyword>
<keyword id="KW-0479">Metal-binding</keyword>
<keyword id="KW-0547">Nucleotide-binding</keyword>
<keyword id="KW-0597">Phosphoprotein</keyword>
<keyword id="KW-0675">Receptor</keyword>
<keyword id="KW-1185">Reference proteome</keyword>
<keyword id="KW-0723">Serine/threonine-protein kinase</keyword>
<keyword id="KW-0732">Signal</keyword>
<keyword id="KW-0808">Transferase</keyword>
<keyword id="KW-0812">Transmembrane</keyword>
<keyword id="KW-1133">Transmembrane helix</keyword>
<protein>
    <recommendedName>
        <fullName>Activin receptor type-1</fullName>
        <ecNumber>2.7.11.30</ecNumber>
    </recommendedName>
    <alternativeName>
        <fullName>Activin receptor type I</fullName>
        <shortName>ACTR-I</shortName>
    </alternativeName>
    <alternativeName>
        <fullName>Serine/threonine-protein kinase receptor R1</fullName>
        <shortName>SKR1</shortName>
    </alternativeName>
    <alternativeName>
        <fullName>TGF-B superfamily receptor type I</fullName>
        <shortName>TSR-I</shortName>
    </alternativeName>
    <alternativeName>
        <fullName>TSK-7L</fullName>
    </alternativeName>
</protein>
<accession>P37172</accession>
<accession>Q3UDH5</accession>
<accession>Q91VF1</accession>
<sequence>MVDGVMILPVLMMMAFPSPSVEDEKPKVNQKLYMCVCEGLSCGNEDHCEGQQCFSSLSINDGFHVYQKGCFQVYEQGKMTCKTPPSPGQAVECCQGDWCNRNITAQLPTKGKSFPGTQNFHLEVGLIILSVVFAVCLLACILGVALRKFKRRNQERLNPRDVEYGTIEGLITTNVGDSTLAELLDHSCTSGSGSGLPFLVQRTVARQITLLECVGKGRYGEVWRGSWQGENVAVKIFSSRDEKSWFRETELYNTVMLRHENILGFIASDMTSRHSSTQLWLITHYHEMGSLYDYLQLTTLDTVSCLRIVLSIASGLAHLHIEIFGTQGKSAIAHRDLKSKNILVKKNGQCCIADLGLAVMHSQSTNQLDVGNNPRVGTKRYMAPEVLDETIQVDCFDSYKRVDIWAFGLVLWEVARRMVSNGIVEDYKPPFYDVVPNDPSFEDMRKVVCVDQQRPNIPNRWFSDPTLTSLAKLMKECWYQNPSARLTALRIKKTLTKIDNSLDKLKTDC</sequence>
<comment type="function">
    <text evidence="2 7 8 9 10 11">Bone morphogenetic protein (BMP) type I receptor that is involved in a wide variety of biological processes, including bone, heart, cartilage, nervous, and reproductive system development and regulation (PubMed:10479450, PubMed:15531373, PubMed:21945937). As a type I receptor, forms heterotetrameric receptor complexes with the type II receptors AMHR2, ACVR2A ors ACVR2B. Upon binding of ligands such as BMP7 or BMP9 to the heteromeric complexes, type II receptors transphosphorylate ACVR1 intracellular domain. In turn, ACVR1 kinase domain is activated and subsequently phosphorylates SMAD1/5/8 proteins that transduce the signal. In addition to its role in mediating BMP pathway-specific signaling, suppresses TGFbeta/activin pathway signaling by interfering with the binding of activin to its type II receptor. Besides canonical SMAD signaling, can activate non-canonical pathways such as p38 mitogen-activated protein kinases/MAPKs (By similarity) (PubMed:10479450, PubMed:15531373, PubMed:21945937, PubMed:25413979). May promote the expression of HAMP, potentially via its interaction with BMP6 (PubMed:31800957).</text>
</comment>
<comment type="catalytic activity">
    <reaction>
        <text>L-threonyl-[receptor-protein] + ATP = O-phospho-L-threonyl-[receptor-protein] + ADP + H(+)</text>
        <dbReference type="Rhea" id="RHEA:44880"/>
        <dbReference type="Rhea" id="RHEA-COMP:11024"/>
        <dbReference type="Rhea" id="RHEA-COMP:11025"/>
        <dbReference type="ChEBI" id="CHEBI:15378"/>
        <dbReference type="ChEBI" id="CHEBI:30013"/>
        <dbReference type="ChEBI" id="CHEBI:30616"/>
        <dbReference type="ChEBI" id="CHEBI:61977"/>
        <dbReference type="ChEBI" id="CHEBI:456216"/>
        <dbReference type="EC" id="2.7.11.30"/>
    </reaction>
</comment>
<comment type="catalytic activity">
    <reaction evidence="2">
        <text>L-seryl-[receptor-protein] + ATP = O-phospho-L-seryl-[receptor-protein] + ADP + H(+)</text>
        <dbReference type="Rhea" id="RHEA:18673"/>
        <dbReference type="Rhea" id="RHEA-COMP:11022"/>
        <dbReference type="Rhea" id="RHEA-COMP:11023"/>
        <dbReference type="ChEBI" id="CHEBI:15378"/>
        <dbReference type="ChEBI" id="CHEBI:29999"/>
        <dbReference type="ChEBI" id="CHEBI:30616"/>
        <dbReference type="ChEBI" id="CHEBI:83421"/>
        <dbReference type="ChEBI" id="CHEBI:456216"/>
        <dbReference type="EC" id="2.7.11.30"/>
    </reaction>
</comment>
<comment type="cofactor">
    <cofactor evidence="1">
        <name>Mg(2+)</name>
        <dbReference type="ChEBI" id="CHEBI:18420"/>
    </cofactor>
    <cofactor evidence="1">
        <name>Mn(2+)</name>
        <dbReference type="ChEBI" id="CHEBI:29035"/>
    </cofactor>
</comment>
<comment type="subunit">
    <text evidence="2 11">Interacts with FKBP1A (By similarity). Interacts with FCHO1 (By similarity). Interacts with CLU. Interacts with type II receptors AMHR2 and ACVR2A (By similarity). Interacts with BMP7 (By similarity). Interacts with BMP9 (By similarity). Interacts with BMP6 (when glycosylated); the interaction may induce HAMP expression (PubMed:31800957). Interacts with TSC22D1/TSC-22 (By similarity).</text>
</comment>
<comment type="subcellular location">
    <subcellularLocation>
        <location>Membrane</location>
        <topology>Single-pass type I membrane protein</topology>
    </subcellularLocation>
</comment>
<comment type="tissue specificity">
    <text evidence="9">Highly expressed in bone during developmental stages (PubMed:21945937). Expressed in normal parenchymal cells, endothelial cells, fibroblasts and tumor-derived epithelial cells.</text>
</comment>
<comment type="developmental stage">
    <text evidence="8">Highly expressed in the node and midline and weakly expressed in 8.5 dpc embryos and in the lateral plate mesoderm.</text>
</comment>
<comment type="disruption phenotype">
    <text evidence="7 9 10">Deletion mutants show a recessive embryonic lethality. At 7.0 dpc, mutant embryos did not show any special abnormalities except a smaller size. However, at 8.0 dpc, mesoderm formation is initiated but its development is arrested around the mid/late streak stage (PubMed:10479450). In an osteoblast-specific manner loss of BMP signaling via ACVR1 directs osteoblasts to increase endogenous bone mass (PubMed:21945937). Additionally, mice lacking ACVR1 in cartilage show reduced SMAD responses, but also decreased p38 MAPK activation (PubMed:25413979).</text>
</comment>
<comment type="similarity">
    <text evidence="12">Belongs to the protein kinase superfamily. TKL Ser/Thr protein kinase family. TGFB receptor subfamily.</text>
</comment>
<name>ACVR1_MOUSE</name>
<feature type="signal peptide" evidence="1">
    <location>
        <begin position="1"/>
        <end position="20"/>
    </location>
</feature>
<feature type="chain" id="PRO_0000024395" description="Activin receptor type-1">
    <location>
        <begin position="21"/>
        <end position="509"/>
    </location>
</feature>
<feature type="topological domain" description="Extracellular" evidence="3">
    <location>
        <begin position="21"/>
        <end position="123"/>
    </location>
</feature>
<feature type="transmembrane region" description="Helical" evidence="3">
    <location>
        <begin position="124"/>
        <end position="146"/>
    </location>
</feature>
<feature type="topological domain" description="Cytoplasmic" evidence="3">
    <location>
        <begin position="147"/>
        <end position="509"/>
    </location>
</feature>
<feature type="domain" description="GS" evidence="5">
    <location>
        <begin position="178"/>
        <end position="207"/>
    </location>
</feature>
<feature type="domain" description="Protein kinase" evidence="4">
    <location>
        <begin position="208"/>
        <end position="502"/>
    </location>
</feature>
<feature type="active site" description="Proton acceptor" evidence="4 6">
    <location>
        <position position="336"/>
    </location>
</feature>
<feature type="binding site" evidence="4">
    <location>
        <begin position="214"/>
        <end position="222"/>
    </location>
    <ligand>
        <name>ATP</name>
        <dbReference type="ChEBI" id="CHEBI:30616"/>
    </ligand>
</feature>
<feature type="binding site" evidence="4">
    <location>
        <position position="235"/>
    </location>
    <ligand>
        <name>ATP</name>
        <dbReference type="ChEBI" id="CHEBI:30616"/>
    </ligand>
</feature>
<feature type="modified residue" description="Phosphoserine" evidence="2">
    <location>
        <position position="501"/>
    </location>
</feature>
<feature type="glycosylation site" description="N-linked (GlcNAc...) asparagine" evidence="3">
    <location>
        <position position="102"/>
    </location>
</feature>
<feature type="sequence conflict" description="In Ref. 3; BAE29239/BAE29286." evidence="12" ref="3">
    <original>K</original>
    <variation>E</variation>
    <location>
        <position position="27"/>
    </location>
</feature>
<feature type="sequence conflict" description="In Ref. 1; AAA40495." evidence="12" ref="1">
    <original>N</original>
    <variation>Y</variation>
    <location>
        <position position="60"/>
    </location>
</feature>
<reference key="1">
    <citation type="journal article" date="1993" name="Science">
        <title>Cloning of a type I TGF-beta receptor and its effect on TGF-beta binding to the type II receptor.</title>
        <authorList>
            <person name="Ebner R."/>
            <person name="Chen H."/>
            <person name="Shum L."/>
            <person name="Lawler S."/>
            <person name="Lee A.L."/>
            <person name="Zioncheck T.F."/>
            <person name="Lopez A.R."/>
            <person name="Derynck R."/>
        </authorList>
    </citation>
    <scope>NUCLEOTIDE SEQUENCE [MRNA]</scope>
    <source>
        <tissue>Mammary gland</tissue>
    </source>
</reference>
<reference key="2">
    <citation type="journal article" date="2001" name="Mamm. Genome">
        <title>High-throughput sequence identification of gene coding variants within alcohol-related QTLs.</title>
        <authorList>
            <person name="Ehringer M.A."/>
            <person name="Thompson J."/>
            <person name="Conroy O."/>
            <person name="Xu Y."/>
            <person name="Yang F."/>
            <person name="Canniff J."/>
            <person name="Beeson M."/>
            <person name="Gordon L."/>
            <person name="Bennett B."/>
            <person name="Johnson T.E."/>
            <person name="Sikela J.M."/>
        </authorList>
    </citation>
    <scope>NUCLEOTIDE SEQUENCE [MRNA]</scope>
    <source>
        <strain>ILS</strain>
        <strain>ISS</strain>
    </source>
</reference>
<reference key="3">
    <citation type="journal article" date="2005" name="Science">
        <title>The transcriptional landscape of the mammalian genome.</title>
        <authorList>
            <person name="Carninci P."/>
            <person name="Kasukawa T."/>
            <person name="Katayama S."/>
            <person name="Gough J."/>
            <person name="Frith M.C."/>
            <person name="Maeda N."/>
            <person name="Oyama R."/>
            <person name="Ravasi T."/>
            <person name="Lenhard B."/>
            <person name="Wells C."/>
            <person name="Kodzius R."/>
            <person name="Shimokawa K."/>
            <person name="Bajic V.B."/>
            <person name="Brenner S.E."/>
            <person name="Batalov S."/>
            <person name="Forrest A.R."/>
            <person name="Zavolan M."/>
            <person name="Davis M.J."/>
            <person name="Wilming L.G."/>
            <person name="Aidinis V."/>
            <person name="Allen J.E."/>
            <person name="Ambesi-Impiombato A."/>
            <person name="Apweiler R."/>
            <person name="Aturaliya R.N."/>
            <person name="Bailey T.L."/>
            <person name="Bansal M."/>
            <person name="Baxter L."/>
            <person name="Beisel K.W."/>
            <person name="Bersano T."/>
            <person name="Bono H."/>
            <person name="Chalk A.M."/>
            <person name="Chiu K.P."/>
            <person name="Choudhary V."/>
            <person name="Christoffels A."/>
            <person name="Clutterbuck D.R."/>
            <person name="Crowe M.L."/>
            <person name="Dalla E."/>
            <person name="Dalrymple B.P."/>
            <person name="de Bono B."/>
            <person name="Della Gatta G."/>
            <person name="di Bernardo D."/>
            <person name="Down T."/>
            <person name="Engstrom P."/>
            <person name="Fagiolini M."/>
            <person name="Faulkner G."/>
            <person name="Fletcher C.F."/>
            <person name="Fukushima T."/>
            <person name="Furuno M."/>
            <person name="Futaki S."/>
            <person name="Gariboldi M."/>
            <person name="Georgii-Hemming P."/>
            <person name="Gingeras T.R."/>
            <person name="Gojobori T."/>
            <person name="Green R.E."/>
            <person name="Gustincich S."/>
            <person name="Harbers M."/>
            <person name="Hayashi Y."/>
            <person name="Hensch T.K."/>
            <person name="Hirokawa N."/>
            <person name="Hill D."/>
            <person name="Huminiecki L."/>
            <person name="Iacono M."/>
            <person name="Ikeo K."/>
            <person name="Iwama A."/>
            <person name="Ishikawa T."/>
            <person name="Jakt M."/>
            <person name="Kanapin A."/>
            <person name="Katoh M."/>
            <person name="Kawasawa Y."/>
            <person name="Kelso J."/>
            <person name="Kitamura H."/>
            <person name="Kitano H."/>
            <person name="Kollias G."/>
            <person name="Krishnan S.P."/>
            <person name="Kruger A."/>
            <person name="Kummerfeld S.K."/>
            <person name="Kurochkin I.V."/>
            <person name="Lareau L.F."/>
            <person name="Lazarevic D."/>
            <person name="Lipovich L."/>
            <person name="Liu J."/>
            <person name="Liuni S."/>
            <person name="McWilliam S."/>
            <person name="Madan Babu M."/>
            <person name="Madera M."/>
            <person name="Marchionni L."/>
            <person name="Matsuda H."/>
            <person name="Matsuzawa S."/>
            <person name="Miki H."/>
            <person name="Mignone F."/>
            <person name="Miyake S."/>
            <person name="Morris K."/>
            <person name="Mottagui-Tabar S."/>
            <person name="Mulder N."/>
            <person name="Nakano N."/>
            <person name="Nakauchi H."/>
            <person name="Ng P."/>
            <person name="Nilsson R."/>
            <person name="Nishiguchi S."/>
            <person name="Nishikawa S."/>
            <person name="Nori F."/>
            <person name="Ohara O."/>
            <person name="Okazaki Y."/>
            <person name="Orlando V."/>
            <person name="Pang K.C."/>
            <person name="Pavan W.J."/>
            <person name="Pavesi G."/>
            <person name="Pesole G."/>
            <person name="Petrovsky N."/>
            <person name="Piazza S."/>
            <person name="Reed J."/>
            <person name="Reid J.F."/>
            <person name="Ring B.Z."/>
            <person name="Ringwald M."/>
            <person name="Rost B."/>
            <person name="Ruan Y."/>
            <person name="Salzberg S.L."/>
            <person name="Sandelin A."/>
            <person name="Schneider C."/>
            <person name="Schoenbach C."/>
            <person name="Sekiguchi K."/>
            <person name="Semple C.A."/>
            <person name="Seno S."/>
            <person name="Sessa L."/>
            <person name="Sheng Y."/>
            <person name="Shibata Y."/>
            <person name="Shimada H."/>
            <person name="Shimada K."/>
            <person name="Silva D."/>
            <person name="Sinclair B."/>
            <person name="Sperling S."/>
            <person name="Stupka E."/>
            <person name="Sugiura K."/>
            <person name="Sultana R."/>
            <person name="Takenaka Y."/>
            <person name="Taki K."/>
            <person name="Tammoja K."/>
            <person name="Tan S.L."/>
            <person name="Tang S."/>
            <person name="Taylor M.S."/>
            <person name="Tegner J."/>
            <person name="Teichmann S.A."/>
            <person name="Ueda H.R."/>
            <person name="van Nimwegen E."/>
            <person name="Verardo R."/>
            <person name="Wei C.L."/>
            <person name="Yagi K."/>
            <person name="Yamanishi H."/>
            <person name="Zabarovsky E."/>
            <person name="Zhu S."/>
            <person name="Zimmer A."/>
            <person name="Hide W."/>
            <person name="Bult C."/>
            <person name="Grimmond S.M."/>
            <person name="Teasdale R.D."/>
            <person name="Liu E.T."/>
            <person name="Brusic V."/>
            <person name="Quackenbush J."/>
            <person name="Wahlestedt C."/>
            <person name="Mattick J.S."/>
            <person name="Hume D.A."/>
            <person name="Kai C."/>
            <person name="Sasaki D."/>
            <person name="Tomaru Y."/>
            <person name="Fukuda S."/>
            <person name="Kanamori-Katayama M."/>
            <person name="Suzuki M."/>
            <person name="Aoki J."/>
            <person name="Arakawa T."/>
            <person name="Iida J."/>
            <person name="Imamura K."/>
            <person name="Itoh M."/>
            <person name="Kato T."/>
            <person name="Kawaji H."/>
            <person name="Kawagashira N."/>
            <person name="Kawashima T."/>
            <person name="Kojima M."/>
            <person name="Kondo S."/>
            <person name="Konno H."/>
            <person name="Nakano K."/>
            <person name="Ninomiya N."/>
            <person name="Nishio T."/>
            <person name="Okada M."/>
            <person name="Plessy C."/>
            <person name="Shibata K."/>
            <person name="Shiraki T."/>
            <person name="Suzuki S."/>
            <person name="Tagami M."/>
            <person name="Waki K."/>
            <person name="Watahiki A."/>
            <person name="Okamura-Oho Y."/>
            <person name="Suzuki H."/>
            <person name="Kawai J."/>
            <person name="Hayashizaki Y."/>
        </authorList>
    </citation>
    <scope>NUCLEOTIDE SEQUENCE [LARGE SCALE MRNA]</scope>
    <source>
        <strain>C57BL/6J</strain>
        <tissue>Bone marrow</tissue>
    </source>
</reference>
<reference key="4">
    <citation type="journal article" date="2004" name="Genome Res.">
        <title>The status, quality, and expansion of the NIH full-length cDNA project: the Mammalian Gene Collection (MGC).</title>
        <authorList>
            <consortium name="The MGC Project Team"/>
        </authorList>
    </citation>
    <scope>NUCLEOTIDE SEQUENCE [LARGE SCALE MRNA]</scope>
    <source>
        <strain>C57BL/6J</strain>
        <tissue>Brain</tissue>
    </source>
</reference>
<reference key="5">
    <citation type="journal article" date="1999" name="Dev. Biol.">
        <title>Multiple roles for activin-like kinase-2 signaling during mouse embryogenesis.</title>
        <authorList>
            <person name="Mishina Y."/>
            <person name="Crombie R."/>
            <person name="Bradley A."/>
            <person name="Behringer R.R."/>
        </authorList>
    </citation>
    <scope>FUNCTION</scope>
    <scope>DISRUPTION PHENOTYPE</scope>
</reference>
<reference key="6">
    <citation type="journal article" date="2004" name="Dev. Biol.">
        <title>BMP signaling through ACVRI is required for left-right patterning in the early mouse embryo.</title>
        <authorList>
            <person name="Kishigami S."/>
            <person name="Yoshikawa S."/>
            <person name="Castranio T."/>
            <person name="Okazaki K."/>
            <person name="Furuta Y."/>
            <person name="Mishina Y."/>
        </authorList>
    </citation>
    <scope>DEVELOPMENTAL STAGE</scope>
    <scope>FUNCTION</scope>
</reference>
<reference key="7">
    <citation type="journal article" date="2011" name="Biochem. Biophys. Res. Commun.">
        <title>Loss-of-function of ACVR1 in osteoblasts increases bone mass and activates canonical Wnt signaling through suppression of Wnt inhibitors SOST and DKK1.</title>
        <authorList>
            <person name="Kamiya N."/>
            <person name="Kaartinen V.M."/>
            <person name="Mishina Y."/>
        </authorList>
    </citation>
    <scope>FUNCTION</scope>
    <scope>DISRUPTION PHENOTYPE</scope>
    <scope>TISSUE SPECIFICITY</scope>
</reference>
<reference key="8">
    <citation type="journal article" date="2015" name="J. Bone Miner. Res.">
        <title>The type I BMP receptor ACVR1/ALK2 is required for chondrogenesis during development.</title>
        <authorList>
            <person name="Rigueur D."/>
            <person name="Brugger S."/>
            <person name="Anbarchian T."/>
            <person name="Kim J.K."/>
            <person name="Lee Y."/>
            <person name="Lyons K.M."/>
        </authorList>
    </citation>
    <scope>FUNCTION</scope>
    <scope>DISRUPTION PHENOTYPE</scope>
</reference>
<reference key="9">
    <citation type="journal article" date="2020" name="Blood">
        <title>Erythroferrone lowers hepcidin by sequestering BMP2/6 heterodimer from binding to the BMP type I receptor ALK3.</title>
        <authorList>
            <person name="Wang C.Y."/>
            <person name="Xu Y."/>
            <person name="Traeger L."/>
            <person name="Dogan D.Y."/>
            <person name="Xiao X."/>
            <person name="Steinbicker A.U."/>
            <person name="Babitt J.L."/>
        </authorList>
    </citation>
    <scope>FUNCTION</scope>
    <scope>INTERACTION WITH HUMAN BMP6</scope>
</reference>
<dbReference type="EC" id="2.7.11.30"/>
<dbReference type="EMBL" id="L15436">
    <property type="protein sequence ID" value="AAA40495.1"/>
    <property type="molecule type" value="mRNA"/>
</dbReference>
<dbReference type="EMBL" id="AF332087">
    <property type="protein sequence ID" value="AAK56115.1"/>
    <property type="molecule type" value="mRNA"/>
</dbReference>
<dbReference type="EMBL" id="AF332088">
    <property type="protein sequence ID" value="AAK56116.1"/>
    <property type="molecule type" value="mRNA"/>
</dbReference>
<dbReference type="EMBL" id="AK150014">
    <property type="protein sequence ID" value="BAE29239.1"/>
    <property type="molecule type" value="mRNA"/>
</dbReference>
<dbReference type="EMBL" id="AK150075">
    <property type="protein sequence ID" value="BAE29286.1"/>
    <property type="molecule type" value="mRNA"/>
</dbReference>
<dbReference type="EMBL" id="BC058718">
    <property type="protein sequence ID" value="AAH58718.1"/>
    <property type="molecule type" value="mRNA"/>
</dbReference>
<dbReference type="CCDS" id="CCDS16050.1"/>
<dbReference type="PIR" id="A37489">
    <property type="entry name" value="I59576"/>
</dbReference>
<dbReference type="RefSeq" id="NP_001103674.1">
    <property type="nucleotide sequence ID" value="NM_001110204.1"/>
</dbReference>
<dbReference type="RefSeq" id="NP_001103675.1">
    <property type="nucleotide sequence ID" value="NM_001110205.1"/>
</dbReference>
<dbReference type="RefSeq" id="NP_001341977.1">
    <property type="nucleotide sequence ID" value="NM_001355048.1"/>
</dbReference>
<dbReference type="RefSeq" id="NP_001341978.1">
    <property type="nucleotide sequence ID" value="NM_001355049.1"/>
</dbReference>
<dbReference type="RefSeq" id="NP_031420.2">
    <property type="nucleotide sequence ID" value="NM_007394.3"/>
</dbReference>
<dbReference type="RefSeq" id="XP_006497685.1">
    <property type="nucleotide sequence ID" value="XM_006497622.5"/>
</dbReference>
<dbReference type="RefSeq" id="XP_017170494.1">
    <property type="nucleotide sequence ID" value="XM_017315005.1"/>
</dbReference>
<dbReference type="RefSeq" id="XP_017170495.1">
    <property type="nucleotide sequence ID" value="XM_017315006.1"/>
</dbReference>
<dbReference type="SMR" id="P37172"/>
<dbReference type="BioGRID" id="197953">
    <property type="interactions" value="4"/>
</dbReference>
<dbReference type="CORUM" id="P37172"/>
<dbReference type="DIP" id="DIP-5798N"/>
<dbReference type="FunCoup" id="P37172">
    <property type="interactions" value="1439"/>
</dbReference>
<dbReference type="MINT" id="P37172"/>
<dbReference type="STRING" id="10090.ENSMUSP00000088453"/>
<dbReference type="BindingDB" id="P37172"/>
<dbReference type="ChEMBL" id="CHEMBL3309042"/>
<dbReference type="GlyCosmos" id="P37172">
    <property type="glycosylation" value="1 site, No reported glycans"/>
</dbReference>
<dbReference type="GlyGen" id="P37172">
    <property type="glycosylation" value="1 site, 1 N-linked glycan (1 site)"/>
</dbReference>
<dbReference type="iPTMnet" id="P37172"/>
<dbReference type="PhosphoSitePlus" id="P37172"/>
<dbReference type="SwissPalm" id="P37172"/>
<dbReference type="PaxDb" id="10090-ENSMUSP00000088453"/>
<dbReference type="PeptideAtlas" id="P37172"/>
<dbReference type="ProteomicsDB" id="285599"/>
<dbReference type="Pumba" id="P37172"/>
<dbReference type="Antibodypedia" id="2371">
    <property type="antibodies" value="648 antibodies from 40 providers"/>
</dbReference>
<dbReference type="DNASU" id="11477"/>
<dbReference type="Ensembl" id="ENSMUST00000056376.12">
    <property type="protein sequence ID" value="ENSMUSP00000056784.6"/>
    <property type="gene ID" value="ENSMUSG00000026836.16"/>
</dbReference>
<dbReference type="Ensembl" id="ENSMUST00000090935.9">
    <property type="protein sequence ID" value="ENSMUSP00000088453.3"/>
    <property type="gene ID" value="ENSMUSG00000026836.16"/>
</dbReference>
<dbReference type="Ensembl" id="ENSMUST00000112599.8">
    <property type="protein sequence ID" value="ENSMUSP00000108218.2"/>
    <property type="gene ID" value="ENSMUSG00000026836.16"/>
</dbReference>
<dbReference type="Ensembl" id="ENSMUST00000112601.9">
    <property type="protein sequence ID" value="ENSMUSP00000108220.3"/>
    <property type="gene ID" value="ENSMUSG00000026836.16"/>
</dbReference>
<dbReference type="GeneID" id="11477"/>
<dbReference type="KEGG" id="mmu:11477"/>
<dbReference type="UCSC" id="uc008jss.1">
    <property type="organism name" value="mouse"/>
</dbReference>
<dbReference type="AGR" id="MGI:87911"/>
<dbReference type="CTD" id="90"/>
<dbReference type="MGI" id="MGI:87911">
    <property type="gene designation" value="Acvr1"/>
</dbReference>
<dbReference type="VEuPathDB" id="HostDB:ENSMUSG00000026836"/>
<dbReference type="eggNOG" id="KOG2052">
    <property type="taxonomic scope" value="Eukaryota"/>
</dbReference>
<dbReference type="GeneTree" id="ENSGT00940000160160"/>
<dbReference type="HOGENOM" id="CLU_000288_8_5_1"/>
<dbReference type="InParanoid" id="P37172"/>
<dbReference type="OMA" id="VFERGCI"/>
<dbReference type="OrthoDB" id="69842at2759"/>
<dbReference type="PhylomeDB" id="P37172"/>
<dbReference type="TreeFam" id="TF314724"/>
<dbReference type="BRENDA" id="2.7.10.2">
    <property type="organism ID" value="3474"/>
</dbReference>
<dbReference type="BioGRID-ORCS" id="11477">
    <property type="hits" value="3 hits in 80 CRISPR screens"/>
</dbReference>
<dbReference type="ChiTaRS" id="Acvr1">
    <property type="organism name" value="mouse"/>
</dbReference>
<dbReference type="PRO" id="PR:P37172"/>
<dbReference type="Proteomes" id="UP000000589">
    <property type="component" value="Chromosome 2"/>
</dbReference>
<dbReference type="RNAct" id="P37172">
    <property type="molecule type" value="protein"/>
</dbReference>
<dbReference type="Bgee" id="ENSMUSG00000026836">
    <property type="expression patterns" value="Expressed in atrioventricular valve and 292 other cell types or tissues"/>
</dbReference>
<dbReference type="ExpressionAtlas" id="P37172">
    <property type="expression patterns" value="baseline and differential"/>
</dbReference>
<dbReference type="GO" id="GO:0048179">
    <property type="term" value="C:activin receptor complex"/>
    <property type="evidence" value="ECO:0007669"/>
    <property type="project" value="Ensembl"/>
</dbReference>
<dbReference type="GO" id="GO:0045177">
    <property type="term" value="C:apical part of cell"/>
    <property type="evidence" value="ECO:0000314"/>
    <property type="project" value="MGI"/>
</dbReference>
<dbReference type="GO" id="GO:0005886">
    <property type="term" value="C:plasma membrane"/>
    <property type="evidence" value="ECO:0000314"/>
    <property type="project" value="MGI"/>
</dbReference>
<dbReference type="GO" id="GO:0048185">
    <property type="term" value="F:activin binding"/>
    <property type="evidence" value="ECO:0000353"/>
    <property type="project" value="MGI"/>
</dbReference>
<dbReference type="GO" id="GO:0016361">
    <property type="term" value="F:activin receptor activity, type I"/>
    <property type="evidence" value="ECO:0000314"/>
    <property type="project" value="MGI"/>
</dbReference>
<dbReference type="GO" id="GO:0005524">
    <property type="term" value="F:ATP binding"/>
    <property type="evidence" value="ECO:0007669"/>
    <property type="project" value="UniProtKB-KW"/>
</dbReference>
<dbReference type="GO" id="GO:0098821">
    <property type="term" value="F:BMP receptor activity"/>
    <property type="evidence" value="ECO:0007669"/>
    <property type="project" value="Ensembl"/>
</dbReference>
<dbReference type="GO" id="GO:0045296">
    <property type="term" value="F:cadherin binding"/>
    <property type="evidence" value="ECO:0007669"/>
    <property type="project" value="Ensembl"/>
</dbReference>
<dbReference type="GO" id="GO:0019838">
    <property type="term" value="F:growth factor binding"/>
    <property type="evidence" value="ECO:0000314"/>
    <property type="project" value="MGI"/>
</dbReference>
<dbReference type="GO" id="GO:0046872">
    <property type="term" value="F:metal ion binding"/>
    <property type="evidence" value="ECO:0007669"/>
    <property type="project" value="UniProtKB-KW"/>
</dbReference>
<dbReference type="GO" id="GO:0042803">
    <property type="term" value="F:protein homodimerization activity"/>
    <property type="evidence" value="ECO:0007669"/>
    <property type="project" value="Ensembl"/>
</dbReference>
<dbReference type="GO" id="GO:1990782">
    <property type="term" value="F:protein tyrosine kinase binding"/>
    <property type="evidence" value="ECO:0007669"/>
    <property type="project" value="Ensembl"/>
</dbReference>
<dbReference type="GO" id="GO:0046332">
    <property type="term" value="F:SMAD binding"/>
    <property type="evidence" value="ECO:0007669"/>
    <property type="project" value="Ensembl"/>
</dbReference>
<dbReference type="GO" id="GO:0050431">
    <property type="term" value="F:transforming growth factor beta binding"/>
    <property type="evidence" value="ECO:0000314"/>
    <property type="project" value="MGI"/>
</dbReference>
<dbReference type="GO" id="GO:0005025">
    <property type="term" value="F:transforming growth factor beta receptor activity, type I"/>
    <property type="evidence" value="ECO:0000314"/>
    <property type="project" value="MGI"/>
</dbReference>
<dbReference type="GO" id="GO:0002526">
    <property type="term" value="P:acute inflammatory response"/>
    <property type="evidence" value="ECO:0000270"/>
    <property type="project" value="UniProtKB"/>
</dbReference>
<dbReference type="GO" id="GO:0003289">
    <property type="term" value="P:atrial septum primum morphogenesis"/>
    <property type="evidence" value="ECO:0000315"/>
    <property type="project" value="BHF-UCL"/>
</dbReference>
<dbReference type="GO" id="GO:0003181">
    <property type="term" value="P:atrioventricular valve morphogenesis"/>
    <property type="evidence" value="ECO:0000315"/>
    <property type="project" value="BHF-UCL"/>
</dbReference>
<dbReference type="GO" id="GO:0030509">
    <property type="term" value="P:BMP signaling pathway"/>
    <property type="evidence" value="ECO:0000315"/>
    <property type="project" value="BHF-UCL"/>
</dbReference>
<dbReference type="GO" id="GO:0001569">
    <property type="term" value="P:branching involved in blood vessel morphogenesis"/>
    <property type="evidence" value="ECO:0000315"/>
    <property type="project" value="MGI"/>
</dbReference>
<dbReference type="GO" id="GO:0060923">
    <property type="term" value="P:cardiac muscle cell fate commitment"/>
    <property type="evidence" value="ECO:0007669"/>
    <property type="project" value="Ensembl"/>
</dbReference>
<dbReference type="GO" id="GO:0007368">
    <property type="term" value="P:determination of left/right symmetry"/>
    <property type="evidence" value="ECO:0000315"/>
    <property type="project" value="MGI"/>
</dbReference>
<dbReference type="GO" id="GO:0003143">
    <property type="term" value="P:embryonic heart tube morphogenesis"/>
    <property type="evidence" value="ECO:0007669"/>
    <property type="project" value="Ensembl"/>
</dbReference>
<dbReference type="GO" id="GO:0061445">
    <property type="term" value="P:endocardial cushion cell fate commitment"/>
    <property type="evidence" value="ECO:0007669"/>
    <property type="project" value="Ensembl"/>
</dbReference>
<dbReference type="GO" id="GO:0003272">
    <property type="term" value="P:endocardial cushion formation"/>
    <property type="evidence" value="ECO:0000315"/>
    <property type="project" value="BHF-UCL"/>
</dbReference>
<dbReference type="GO" id="GO:0003274">
    <property type="term" value="P:endocardial cushion fusion"/>
    <property type="evidence" value="ECO:0000315"/>
    <property type="project" value="BHF-UCL"/>
</dbReference>
<dbReference type="GO" id="GO:0007369">
    <property type="term" value="P:gastrulation"/>
    <property type="evidence" value="ECO:0000315"/>
    <property type="project" value="MGI"/>
</dbReference>
<dbReference type="GO" id="GO:0001702">
    <property type="term" value="P:gastrulation with mouth forming second"/>
    <property type="evidence" value="ECO:0000315"/>
    <property type="project" value="MGI"/>
</dbReference>
<dbReference type="GO" id="GO:0007281">
    <property type="term" value="P:germ cell development"/>
    <property type="evidence" value="ECO:0000315"/>
    <property type="project" value="MGI"/>
</dbReference>
<dbReference type="GO" id="GO:0007507">
    <property type="term" value="P:heart development"/>
    <property type="evidence" value="ECO:0000315"/>
    <property type="project" value="MGI"/>
</dbReference>
<dbReference type="GO" id="GO:0001701">
    <property type="term" value="P:in utero embryonic development"/>
    <property type="evidence" value="ECO:0000315"/>
    <property type="project" value="MGI"/>
</dbReference>
<dbReference type="GO" id="GO:0007498">
    <property type="term" value="P:mesoderm development"/>
    <property type="evidence" value="ECO:0000315"/>
    <property type="project" value="MGI"/>
</dbReference>
<dbReference type="GO" id="GO:0001707">
    <property type="term" value="P:mesoderm formation"/>
    <property type="evidence" value="ECO:0000315"/>
    <property type="project" value="MGI"/>
</dbReference>
<dbReference type="GO" id="GO:0003183">
    <property type="term" value="P:mitral valve morphogenesis"/>
    <property type="evidence" value="ECO:0007669"/>
    <property type="project" value="Ensembl"/>
</dbReference>
<dbReference type="GO" id="GO:0032926">
    <property type="term" value="P:negative regulation of activin receptor signaling pathway"/>
    <property type="evidence" value="ECO:0007669"/>
    <property type="project" value="Ensembl"/>
</dbReference>
<dbReference type="GO" id="GO:2001237">
    <property type="term" value="P:negative regulation of extrinsic apoptotic signaling pathway"/>
    <property type="evidence" value="ECO:0007669"/>
    <property type="project" value="Ensembl"/>
</dbReference>
<dbReference type="GO" id="GO:2000134">
    <property type="term" value="P:negative regulation of G1/S transition of mitotic cell cycle"/>
    <property type="evidence" value="ECO:0007669"/>
    <property type="project" value="Ensembl"/>
</dbReference>
<dbReference type="GO" id="GO:0001755">
    <property type="term" value="P:neural crest cell migration"/>
    <property type="evidence" value="ECO:0000315"/>
    <property type="project" value="MGI"/>
</dbReference>
<dbReference type="GO" id="GO:0001649">
    <property type="term" value="P:osteoblast differentiation"/>
    <property type="evidence" value="ECO:0007669"/>
    <property type="project" value="Ensembl"/>
</dbReference>
<dbReference type="GO" id="GO:0060037">
    <property type="term" value="P:pharyngeal system development"/>
    <property type="evidence" value="ECO:0000315"/>
    <property type="project" value="MGI"/>
</dbReference>
<dbReference type="GO" id="GO:0030501">
    <property type="term" value="P:positive regulation of bone mineralization"/>
    <property type="evidence" value="ECO:0007669"/>
    <property type="project" value="Ensembl"/>
</dbReference>
<dbReference type="GO" id="GO:0062043">
    <property type="term" value="P:positive regulation of cardiac epithelial to mesenchymal transition"/>
    <property type="evidence" value="ECO:0000315"/>
    <property type="project" value="BHF-UCL"/>
</dbReference>
<dbReference type="GO" id="GO:0030335">
    <property type="term" value="P:positive regulation of cell migration"/>
    <property type="evidence" value="ECO:0007669"/>
    <property type="project" value="Ensembl"/>
</dbReference>
<dbReference type="GO" id="GO:2000017">
    <property type="term" value="P:positive regulation of determination of dorsal identity"/>
    <property type="evidence" value="ECO:0007669"/>
    <property type="project" value="Ensembl"/>
</dbReference>
<dbReference type="GO" id="GO:0045669">
    <property type="term" value="P:positive regulation of osteoblast differentiation"/>
    <property type="evidence" value="ECO:0007669"/>
    <property type="project" value="Ensembl"/>
</dbReference>
<dbReference type="GO" id="GO:0060391">
    <property type="term" value="P:positive regulation of SMAD protein signal transduction"/>
    <property type="evidence" value="ECO:0000315"/>
    <property type="project" value="BHF-UCL"/>
</dbReference>
<dbReference type="GO" id="GO:0045944">
    <property type="term" value="P:positive regulation of transcription by RNA polymerase II"/>
    <property type="evidence" value="ECO:0000315"/>
    <property type="project" value="BHF-UCL"/>
</dbReference>
<dbReference type="GO" id="GO:0051145">
    <property type="term" value="P:smooth muscle cell differentiation"/>
    <property type="evidence" value="ECO:0000315"/>
    <property type="project" value="MGI"/>
</dbReference>
<dbReference type="GO" id="GO:0007179">
    <property type="term" value="P:transforming growth factor beta receptor signaling pathway"/>
    <property type="evidence" value="ECO:0000314"/>
    <property type="project" value="MGI"/>
</dbReference>
<dbReference type="GO" id="GO:0001655">
    <property type="term" value="P:urogenital system development"/>
    <property type="evidence" value="ECO:0000266"/>
    <property type="project" value="MGI"/>
</dbReference>
<dbReference type="GO" id="GO:0060412">
    <property type="term" value="P:ventricular septum morphogenesis"/>
    <property type="evidence" value="ECO:0000315"/>
    <property type="project" value="BHF-UCL"/>
</dbReference>
<dbReference type="CDD" id="cd14142">
    <property type="entry name" value="STKc_ACVR1_ALK1"/>
    <property type="match status" value="1"/>
</dbReference>
<dbReference type="CDD" id="cd23535">
    <property type="entry name" value="TFP_LU_ECD_ALK2"/>
    <property type="match status" value="1"/>
</dbReference>
<dbReference type="FunFam" id="1.10.510.10:FF:000018">
    <property type="entry name" value="Receptor protein serine/threonine kinase"/>
    <property type="match status" value="1"/>
</dbReference>
<dbReference type="FunFam" id="3.30.200.20:FF:000064">
    <property type="entry name" value="Receptor protein serine/threonine kinase"/>
    <property type="match status" value="1"/>
</dbReference>
<dbReference type="FunFam" id="2.10.60.10:FF:000008">
    <property type="entry name" value="Serine/threonine-protein kinase receptor"/>
    <property type="match status" value="1"/>
</dbReference>
<dbReference type="Gene3D" id="2.10.60.10">
    <property type="entry name" value="CD59"/>
    <property type="match status" value="1"/>
</dbReference>
<dbReference type="Gene3D" id="3.30.200.20">
    <property type="entry name" value="Phosphorylase Kinase, domain 1"/>
    <property type="match status" value="1"/>
</dbReference>
<dbReference type="Gene3D" id="1.10.510.10">
    <property type="entry name" value="Transferase(Phosphotransferase) domain 1"/>
    <property type="match status" value="1"/>
</dbReference>
<dbReference type="InterPro" id="IPR000472">
    <property type="entry name" value="Activin_recp"/>
</dbReference>
<dbReference type="InterPro" id="IPR003605">
    <property type="entry name" value="GS_dom"/>
</dbReference>
<dbReference type="InterPro" id="IPR011009">
    <property type="entry name" value="Kinase-like_dom_sf"/>
</dbReference>
<dbReference type="InterPro" id="IPR000719">
    <property type="entry name" value="Prot_kinase_dom"/>
</dbReference>
<dbReference type="InterPro" id="IPR017441">
    <property type="entry name" value="Protein_kinase_ATP_BS"/>
</dbReference>
<dbReference type="InterPro" id="IPR001245">
    <property type="entry name" value="Ser-Thr/Tyr_kinase_cat_dom"/>
</dbReference>
<dbReference type="InterPro" id="IPR008271">
    <property type="entry name" value="Ser/Thr_kinase_AS"/>
</dbReference>
<dbReference type="InterPro" id="IPR045860">
    <property type="entry name" value="Snake_toxin-like_sf"/>
</dbReference>
<dbReference type="InterPro" id="IPR000333">
    <property type="entry name" value="TGFB_receptor"/>
</dbReference>
<dbReference type="PANTHER" id="PTHR23255:SF69">
    <property type="entry name" value="ACTIVIN RECEPTOR TYPE-1"/>
    <property type="match status" value="1"/>
</dbReference>
<dbReference type="PANTHER" id="PTHR23255">
    <property type="entry name" value="TRANSFORMING GROWTH FACTOR-BETA RECEPTOR TYPE I AND II"/>
    <property type="match status" value="1"/>
</dbReference>
<dbReference type="Pfam" id="PF01064">
    <property type="entry name" value="Activin_recp"/>
    <property type="match status" value="1"/>
</dbReference>
<dbReference type="Pfam" id="PF07714">
    <property type="entry name" value="PK_Tyr_Ser-Thr"/>
    <property type="match status" value="1"/>
</dbReference>
<dbReference type="Pfam" id="PF08515">
    <property type="entry name" value="TGF_beta_GS"/>
    <property type="match status" value="1"/>
</dbReference>
<dbReference type="PRINTS" id="PR00653">
    <property type="entry name" value="ACTIVIN2R"/>
</dbReference>
<dbReference type="SMART" id="SM00467">
    <property type="entry name" value="GS"/>
    <property type="match status" value="1"/>
</dbReference>
<dbReference type="SMART" id="SM00220">
    <property type="entry name" value="S_TKc"/>
    <property type="match status" value="1"/>
</dbReference>
<dbReference type="SUPFAM" id="SSF56112">
    <property type="entry name" value="Protein kinase-like (PK-like)"/>
    <property type="match status" value="1"/>
</dbReference>
<dbReference type="SUPFAM" id="SSF57302">
    <property type="entry name" value="Snake toxin-like"/>
    <property type="match status" value="1"/>
</dbReference>
<dbReference type="PROSITE" id="PS51256">
    <property type="entry name" value="GS"/>
    <property type="match status" value="1"/>
</dbReference>
<dbReference type="PROSITE" id="PS00107">
    <property type="entry name" value="PROTEIN_KINASE_ATP"/>
    <property type="match status" value="1"/>
</dbReference>
<dbReference type="PROSITE" id="PS50011">
    <property type="entry name" value="PROTEIN_KINASE_DOM"/>
    <property type="match status" value="1"/>
</dbReference>
<dbReference type="PROSITE" id="PS00108">
    <property type="entry name" value="PROTEIN_KINASE_ST"/>
    <property type="match status" value="1"/>
</dbReference>
<proteinExistence type="evidence at protein level"/>